<evidence type="ECO:0000255" key="1">
    <source>
        <dbReference type="HAMAP-Rule" id="MF_01588"/>
    </source>
</evidence>
<keyword id="KW-0227">DNA damage</keyword>
<keyword id="KW-0234">DNA repair</keyword>
<keyword id="KW-0235">DNA replication</keyword>
<keyword id="KW-0436">Ligase</keyword>
<keyword id="KW-0460">Magnesium</keyword>
<keyword id="KW-0464">Manganese</keyword>
<keyword id="KW-0479">Metal-binding</keyword>
<keyword id="KW-0520">NAD</keyword>
<keyword id="KW-1185">Reference proteome</keyword>
<keyword id="KW-0862">Zinc</keyword>
<reference key="1">
    <citation type="journal article" date="2008" name="Proc. Natl. Acad. Sci. U.S.A.">
        <title>Niche adaptation and genome expansion in the chlorophyll d-producing cyanobacterium Acaryochloris marina.</title>
        <authorList>
            <person name="Swingley W.D."/>
            <person name="Chen M."/>
            <person name="Cheung P.C."/>
            <person name="Conrad A.L."/>
            <person name="Dejesa L.C."/>
            <person name="Hao J."/>
            <person name="Honchak B.M."/>
            <person name="Karbach L.E."/>
            <person name="Kurdoglu A."/>
            <person name="Lahiri S."/>
            <person name="Mastrian S.D."/>
            <person name="Miyashita H."/>
            <person name="Page L."/>
            <person name="Ramakrishna P."/>
            <person name="Satoh S."/>
            <person name="Sattley W.M."/>
            <person name="Shimada Y."/>
            <person name="Taylor H.L."/>
            <person name="Tomo T."/>
            <person name="Tsuchiya T."/>
            <person name="Wang Z.T."/>
            <person name="Raymond J."/>
            <person name="Mimuro M."/>
            <person name="Blankenship R.E."/>
            <person name="Touchman J.W."/>
        </authorList>
    </citation>
    <scope>NUCLEOTIDE SEQUENCE [LARGE SCALE GENOMIC DNA]</scope>
    <source>
        <strain>MBIC 11017</strain>
    </source>
</reference>
<comment type="function">
    <text evidence="1">DNA ligase that catalyzes the formation of phosphodiester linkages between 5'-phosphoryl and 3'-hydroxyl groups in double-stranded DNA using NAD as a coenzyme and as the energy source for the reaction. It is essential for DNA replication and repair of damaged DNA.</text>
</comment>
<comment type="catalytic activity">
    <reaction evidence="1">
        <text>NAD(+) + (deoxyribonucleotide)n-3'-hydroxyl + 5'-phospho-(deoxyribonucleotide)m = (deoxyribonucleotide)n+m + AMP + beta-nicotinamide D-nucleotide.</text>
        <dbReference type="EC" id="6.5.1.2"/>
    </reaction>
</comment>
<comment type="cofactor">
    <cofactor evidence="1">
        <name>Mg(2+)</name>
        <dbReference type="ChEBI" id="CHEBI:18420"/>
    </cofactor>
    <cofactor evidence="1">
        <name>Mn(2+)</name>
        <dbReference type="ChEBI" id="CHEBI:29035"/>
    </cofactor>
</comment>
<comment type="similarity">
    <text evidence="1">Belongs to the NAD-dependent DNA ligase family. LigA subfamily.</text>
</comment>
<feature type="chain" id="PRO_0000340320" description="DNA ligase">
    <location>
        <begin position="1"/>
        <end position="675"/>
    </location>
</feature>
<feature type="domain" description="BRCT" evidence="1">
    <location>
        <begin position="598"/>
        <end position="675"/>
    </location>
</feature>
<feature type="active site" description="N6-AMP-lysine intermediate" evidence="1">
    <location>
        <position position="120"/>
    </location>
</feature>
<feature type="binding site" evidence="1">
    <location>
        <begin position="36"/>
        <end position="40"/>
    </location>
    <ligand>
        <name>NAD(+)</name>
        <dbReference type="ChEBI" id="CHEBI:57540"/>
    </ligand>
</feature>
<feature type="binding site" evidence="1">
    <location>
        <begin position="85"/>
        <end position="86"/>
    </location>
    <ligand>
        <name>NAD(+)</name>
        <dbReference type="ChEBI" id="CHEBI:57540"/>
    </ligand>
</feature>
<feature type="binding site" evidence="1">
    <location>
        <position position="118"/>
    </location>
    <ligand>
        <name>NAD(+)</name>
        <dbReference type="ChEBI" id="CHEBI:57540"/>
    </ligand>
</feature>
<feature type="binding site" evidence="1">
    <location>
        <position position="141"/>
    </location>
    <ligand>
        <name>NAD(+)</name>
        <dbReference type="ChEBI" id="CHEBI:57540"/>
    </ligand>
</feature>
<feature type="binding site" evidence="1">
    <location>
        <position position="178"/>
    </location>
    <ligand>
        <name>NAD(+)</name>
        <dbReference type="ChEBI" id="CHEBI:57540"/>
    </ligand>
</feature>
<feature type="binding site" evidence="1">
    <location>
        <position position="298"/>
    </location>
    <ligand>
        <name>NAD(+)</name>
        <dbReference type="ChEBI" id="CHEBI:57540"/>
    </ligand>
</feature>
<feature type="binding site" evidence="1">
    <location>
        <position position="322"/>
    </location>
    <ligand>
        <name>NAD(+)</name>
        <dbReference type="ChEBI" id="CHEBI:57540"/>
    </ligand>
</feature>
<feature type="binding site" evidence="1">
    <location>
        <position position="416"/>
    </location>
    <ligand>
        <name>Zn(2+)</name>
        <dbReference type="ChEBI" id="CHEBI:29105"/>
    </ligand>
</feature>
<feature type="binding site" evidence="1">
    <location>
        <position position="419"/>
    </location>
    <ligand>
        <name>Zn(2+)</name>
        <dbReference type="ChEBI" id="CHEBI:29105"/>
    </ligand>
</feature>
<feature type="binding site" evidence="1">
    <location>
        <position position="434"/>
    </location>
    <ligand>
        <name>Zn(2+)</name>
        <dbReference type="ChEBI" id="CHEBI:29105"/>
    </ligand>
</feature>
<feature type="binding site" evidence="1">
    <location>
        <position position="439"/>
    </location>
    <ligand>
        <name>Zn(2+)</name>
        <dbReference type="ChEBI" id="CHEBI:29105"/>
    </ligand>
</feature>
<protein>
    <recommendedName>
        <fullName evidence="1">DNA ligase</fullName>
        <ecNumber evidence="1">6.5.1.2</ecNumber>
    </recommendedName>
    <alternativeName>
        <fullName evidence="1">Polydeoxyribonucleotide synthase [NAD(+)]</fullName>
    </alternativeName>
</protein>
<sequence>MNTVSSSDQARVQELRQLLQKASYAYYGLDAPLMEDAVYDQLYHELVDLEAQYPQLITPDSPTQRVGERPATQFVSVQHRIPLYSLENAFDRGDMDTWDERWHKLVPNLSQEPGYVTELKIDGSALALTYENGLLVRGTTRGDGTKGEEITQNVRTIRSIPLRLNIEHPPEWLEVRGEAFLGLQVFDQINRDRIQAGEAEFANPRNAAAGTLRQLDSKVVAERKLDFFAYTIHISGPTDDLALPQTQWQALETLKQLGFRVNPNRRQCESLAEVQTYYDDWSLKRLDLPYLTDGVVIKLDNLGVQDELGFTQKFPRWAIAWKYPPEEAATRIEQITVNVGRTGALTPVAEFKPVQLAGTTVSRATLHNRDRISELDIHIGDTVVVRKAGEIIPEVLRVLPELRPAGAQPYQMPTACPSCGQPAVQLETEAVTRCVNASCPAILRGSLIHWVSRGALDIDGLGEKIVGQLTDSQMVQSVADLYELNEDKLMDLDRMGTKLARKIVSAIATSKQQPWHRVLYGLGIRHVGSVNAQLLTENYPTVDALMAVDGDKIATIHGIGPEIAQSVYEWFQTPTNQTLIQRLQSAGLQFEAIVSESTQPQTLSGKTFVITGTLPTLKRDQAKQMIQDAGGKVTGSVSKNTSYVVVGADAGSKLTKAQSLGINQLSEADLLALLQ</sequence>
<gene>
    <name evidence="1" type="primary">ligA</name>
    <name type="ordered locus">AM1_1187</name>
</gene>
<name>DNLJ_ACAM1</name>
<accession>B0C308</accession>
<proteinExistence type="inferred from homology"/>
<dbReference type="EC" id="6.5.1.2" evidence="1"/>
<dbReference type="EMBL" id="CP000828">
    <property type="protein sequence ID" value="ABW26224.1"/>
    <property type="molecule type" value="Genomic_DNA"/>
</dbReference>
<dbReference type="RefSeq" id="WP_012161773.1">
    <property type="nucleotide sequence ID" value="NC_009925.1"/>
</dbReference>
<dbReference type="SMR" id="B0C308"/>
<dbReference type="STRING" id="329726.AM1_1187"/>
<dbReference type="KEGG" id="amr:AM1_1187"/>
<dbReference type="eggNOG" id="COG0272">
    <property type="taxonomic scope" value="Bacteria"/>
</dbReference>
<dbReference type="HOGENOM" id="CLU_007764_2_1_3"/>
<dbReference type="OrthoDB" id="9759736at2"/>
<dbReference type="Proteomes" id="UP000000268">
    <property type="component" value="Chromosome"/>
</dbReference>
<dbReference type="GO" id="GO:0005829">
    <property type="term" value="C:cytosol"/>
    <property type="evidence" value="ECO:0007669"/>
    <property type="project" value="TreeGrafter"/>
</dbReference>
<dbReference type="GO" id="GO:0003677">
    <property type="term" value="F:DNA binding"/>
    <property type="evidence" value="ECO:0007669"/>
    <property type="project" value="InterPro"/>
</dbReference>
<dbReference type="GO" id="GO:0003911">
    <property type="term" value="F:DNA ligase (NAD+) activity"/>
    <property type="evidence" value="ECO:0007669"/>
    <property type="project" value="UniProtKB-UniRule"/>
</dbReference>
<dbReference type="GO" id="GO:0046872">
    <property type="term" value="F:metal ion binding"/>
    <property type="evidence" value="ECO:0007669"/>
    <property type="project" value="UniProtKB-KW"/>
</dbReference>
<dbReference type="GO" id="GO:0006281">
    <property type="term" value="P:DNA repair"/>
    <property type="evidence" value="ECO:0007669"/>
    <property type="project" value="UniProtKB-KW"/>
</dbReference>
<dbReference type="GO" id="GO:0006260">
    <property type="term" value="P:DNA replication"/>
    <property type="evidence" value="ECO:0007669"/>
    <property type="project" value="UniProtKB-KW"/>
</dbReference>
<dbReference type="CDD" id="cd00114">
    <property type="entry name" value="LIGANc"/>
    <property type="match status" value="1"/>
</dbReference>
<dbReference type="FunFam" id="1.10.150.20:FF:000006">
    <property type="entry name" value="DNA ligase"/>
    <property type="match status" value="1"/>
</dbReference>
<dbReference type="FunFam" id="1.10.150.20:FF:000007">
    <property type="entry name" value="DNA ligase"/>
    <property type="match status" value="1"/>
</dbReference>
<dbReference type="FunFam" id="2.40.50.140:FF:000012">
    <property type="entry name" value="DNA ligase"/>
    <property type="match status" value="1"/>
</dbReference>
<dbReference type="FunFam" id="3.30.470.30:FF:000001">
    <property type="entry name" value="DNA ligase"/>
    <property type="match status" value="1"/>
</dbReference>
<dbReference type="Gene3D" id="6.20.10.30">
    <property type="match status" value="1"/>
</dbReference>
<dbReference type="Gene3D" id="1.10.150.20">
    <property type="entry name" value="5' to 3' exonuclease, C-terminal subdomain"/>
    <property type="match status" value="2"/>
</dbReference>
<dbReference type="Gene3D" id="3.40.50.10190">
    <property type="entry name" value="BRCT domain"/>
    <property type="match status" value="1"/>
</dbReference>
<dbReference type="Gene3D" id="3.30.470.30">
    <property type="entry name" value="DNA ligase/mRNA capping enzyme"/>
    <property type="match status" value="1"/>
</dbReference>
<dbReference type="Gene3D" id="1.10.287.610">
    <property type="entry name" value="Helix hairpin bin"/>
    <property type="match status" value="1"/>
</dbReference>
<dbReference type="Gene3D" id="2.40.50.140">
    <property type="entry name" value="Nucleic acid-binding proteins"/>
    <property type="match status" value="1"/>
</dbReference>
<dbReference type="HAMAP" id="MF_01588">
    <property type="entry name" value="DNA_ligase_A"/>
    <property type="match status" value="1"/>
</dbReference>
<dbReference type="InterPro" id="IPR001357">
    <property type="entry name" value="BRCT_dom"/>
</dbReference>
<dbReference type="InterPro" id="IPR036420">
    <property type="entry name" value="BRCT_dom_sf"/>
</dbReference>
<dbReference type="InterPro" id="IPR041663">
    <property type="entry name" value="DisA/LigA_HHH"/>
</dbReference>
<dbReference type="InterPro" id="IPR001679">
    <property type="entry name" value="DNA_ligase"/>
</dbReference>
<dbReference type="InterPro" id="IPR018239">
    <property type="entry name" value="DNA_ligase_AS"/>
</dbReference>
<dbReference type="InterPro" id="IPR033136">
    <property type="entry name" value="DNA_ligase_CS"/>
</dbReference>
<dbReference type="InterPro" id="IPR013839">
    <property type="entry name" value="DNAligase_adenylation"/>
</dbReference>
<dbReference type="InterPro" id="IPR013840">
    <property type="entry name" value="DNAligase_N"/>
</dbReference>
<dbReference type="InterPro" id="IPR003583">
    <property type="entry name" value="Hlx-hairpin-Hlx_DNA-bd_motif"/>
</dbReference>
<dbReference type="InterPro" id="IPR012340">
    <property type="entry name" value="NA-bd_OB-fold"/>
</dbReference>
<dbReference type="InterPro" id="IPR004150">
    <property type="entry name" value="NAD_DNA_ligase_OB"/>
</dbReference>
<dbReference type="InterPro" id="IPR010994">
    <property type="entry name" value="RuvA_2-like"/>
</dbReference>
<dbReference type="InterPro" id="IPR004149">
    <property type="entry name" value="Znf_DNAligase_C4"/>
</dbReference>
<dbReference type="NCBIfam" id="TIGR00575">
    <property type="entry name" value="dnlj"/>
    <property type="match status" value="1"/>
</dbReference>
<dbReference type="NCBIfam" id="NF005932">
    <property type="entry name" value="PRK07956.1"/>
    <property type="match status" value="1"/>
</dbReference>
<dbReference type="PANTHER" id="PTHR23389">
    <property type="entry name" value="CHROMOSOME TRANSMISSION FIDELITY FACTOR 18"/>
    <property type="match status" value="1"/>
</dbReference>
<dbReference type="PANTHER" id="PTHR23389:SF9">
    <property type="entry name" value="DNA LIGASE"/>
    <property type="match status" value="1"/>
</dbReference>
<dbReference type="Pfam" id="PF00533">
    <property type="entry name" value="BRCT"/>
    <property type="match status" value="1"/>
</dbReference>
<dbReference type="Pfam" id="PF01653">
    <property type="entry name" value="DNA_ligase_aden"/>
    <property type="match status" value="1"/>
</dbReference>
<dbReference type="Pfam" id="PF03120">
    <property type="entry name" value="DNA_ligase_OB"/>
    <property type="match status" value="1"/>
</dbReference>
<dbReference type="Pfam" id="PF03119">
    <property type="entry name" value="DNA_ligase_ZBD"/>
    <property type="match status" value="1"/>
</dbReference>
<dbReference type="Pfam" id="PF12826">
    <property type="entry name" value="HHH_2"/>
    <property type="match status" value="1"/>
</dbReference>
<dbReference type="Pfam" id="PF14520">
    <property type="entry name" value="HHH_5"/>
    <property type="match status" value="1"/>
</dbReference>
<dbReference type="Pfam" id="PF22745">
    <property type="entry name" value="Nlig-Ia"/>
    <property type="match status" value="1"/>
</dbReference>
<dbReference type="PIRSF" id="PIRSF001604">
    <property type="entry name" value="LigA"/>
    <property type="match status" value="1"/>
</dbReference>
<dbReference type="SMART" id="SM00292">
    <property type="entry name" value="BRCT"/>
    <property type="match status" value="1"/>
</dbReference>
<dbReference type="SMART" id="SM00278">
    <property type="entry name" value="HhH1"/>
    <property type="match status" value="3"/>
</dbReference>
<dbReference type="SMART" id="SM00532">
    <property type="entry name" value="LIGANc"/>
    <property type="match status" value="1"/>
</dbReference>
<dbReference type="SUPFAM" id="SSF52113">
    <property type="entry name" value="BRCT domain"/>
    <property type="match status" value="1"/>
</dbReference>
<dbReference type="SUPFAM" id="SSF56091">
    <property type="entry name" value="DNA ligase/mRNA capping enzyme, catalytic domain"/>
    <property type="match status" value="1"/>
</dbReference>
<dbReference type="SUPFAM" id="SSF50249">
    <property type="entry name" value="Nucleic acid-binding proteins"/>
    <property type="match status" value="1"/>
</dbReference>
<dbReference type="SUPFAM" id="SSF47781">
    <property type="entry name" value="RuvA domain 2-like"/>
    <property type="match status" value="1"/>
</dbReference>
<dbReference type="PROSITE" id="PS50172">
    <property type="entry name" value="BRCT"/>
    <property type="match status" value="1"/>
</dbReference>
<dbReference type="PROSITE" id="PS01055">
    <property type="entry name" value="DNA_LIGASE_N1"/>
    <property type="match status" value="1"/>
</dbReference>
<dbReference type="PROSITE" id="PS01056">
    <property type="entry name" value="DNA_LIGASE_N2"/>
    <property type="match status" value="1"/>
</dbReference>
<organism>
    <name type="scientific">Acaryochloris marina (strain MBIC 11017)</name>
    <dbReference type="NCBI Taxonomy" id="329726"/>
    <lineage>
        <taxon>Bacteria</taxon>
        <taxon>Bacillati</taxon>
        <taxon>Cyanobacteriota</taxon>
        <taxon>Cyanophyceae</taxon>
        <taxon>Acaryochloridales</taxon>
        <taxon>Acaryochloridaceae</taxon>
        <taxon>Acaryochloris</taxon>
    </lineage>
</organism>